<proteinExistence type="inferred from homology"/>
<feature type="chain" id="PRO_0000432121" description="TPR repeat-containing protein ZIP4">
    <location>
        <begin position="1"/>
        <end position="953"/>
    </location>
</feature>
<feature type="repeat" description="TPR 1" evidence="2">
    <location>
        <begin position="129"/>
        <end position="162"/>
    </location>
</feature>
<feature type="repeat" description="TPR 2" evidence="2">
    <location>
        <begin position="432"/>
        <end position="465"/>
    </location>
</feature>
<feature type="repeat" description="TPR 3" evidence="2">
    <location>
        <begin position="473"/>
        <end position="506"/>
    </location>
</feature>
<feature type="region of interest" description="Disordered" evidence="3">
    <location>
        <begin position="248"/>
        <end position="269"/>
    </location>
</feature>
<feature type="region of interest" description="Disordered" evidence="3">
    <location>
        <begin position="924"/>
        <end position="953"/>
    </location>
</feature>
<feature type="compositionally biased region" description="Polar residues" evidence="3">
    <location>
        <begin position="943"/>
        <end position="953"/>
    </location>
</feature>
<keyword id="KW-0158">Chromosome</keyword>
<keyword id="KW-0469">Meiosis</keyword>
<keyword id="KW-0539">Nucleus</keyword>
<keyword id="KW-1185">Reference proteome</keyword>
<keyword id="KW-0677">Repeat</keyword>
<keyword id="KW-0802">TPR repeat</keyword>
<evidence type="ECO:0000250" key="1">
    <source>
        <dbReference type="UniProtKB" id="Q5N829"/>
    </source>
</evidence>
<evidence type="ECO:0000255" key="2"/>
<evidence type="ECO:0000256" key="3">
    <source>
        <dbReference type="SAM" id="MobiDB-lite"/>
    </source>
</evidence>
<evidence type="ECO:0000305" key="4"/>
<evidence type="ECO:0000312" key="5">
    <source>
        <dbReference type="EMBL" id="EAY76788.1"/>
    </source>
</evidence>
<dbReference type="EMBL" id="CM000126">
    <property type="protein sequence ID" value="EAY76788.1"/>
    <property type="molecule type" value="Genomic_DNA"/>
</dbReference>
<dbReference type="SMR" id="A2WXU2"/>
<dbReference type="STRING" id="39946.A2WXU2"/>
<dbReference type="EnsemblPlants" id="BGIOSGA004961-TA">
    <property type="protein sequence ID" value="BGIOSGA004961-PA"/>
    <property type="gene ID" value="BGIOSGA004961"/>
</dbReference>
<dbReference type="EnsemblPlants" id="OsZS97_01G042360_01">
    <property type="protein sequence ID" value="OsZS97_01G042360_01"/>
    <property type="gene ID" value="OsZS97_01G042360"/>
</dbReference>
<dbReference type="Gramene" id="BGIOSGA004961-TA">
    <property type="protein sequence ID" value="BGIOSGA004961-PA"/>
    <property type="gene ID" value="BGIOSGA004961"/>
</dbReference>
<dbReference type="Gramene" id="OsZS97_01G042360_01">
    <property type="protein sequence ID" value="OsZS97_01G042360_01"/>
    <property type="gene ID" value="OsZS97_01G042360"/>
</dbReference>
<dbReference type="HOGENOM" id="CLU_307264_0_0_1"/>
<dbReference type="OMA" id="NYETQMN"/>
<dbReference type="Proteomes" id="UP000007015">
    <property type="component" value="Chromosome 1"/>
</dbReference>
<dbReference type="GO" id="GO:0005694">
    <property type="term" value="C:chromosome"/>
    <property type="evidence" value="ECO:0007669"/>
    <property type="project" value="UniProtKB-SubCell"/>
</dbReference>
<dbReference type="GO" id="GO:0005634">
    <property type="term" value="C:nucleus"/>
    <property type="evidence" value="ECO:0007669"/>
    <property type="project" value="UniProtKB-SubCell"/>
</dbReference>
<dbReference type="GO" id="GO:0007143">
    <property type="term" value="P:female meiotic nuclear division"/>
    <property type="evidence" value="ECO:0007669"/>
    <property type="project" value="EnsemblPlants"/>
</dbReference>
<dbReference type="GO" id="GO:0007129">
    <property type="term" value="P:homologous chromosome pairing at meiosis"/>
    <property type="evidence" value="ECO:0007669"/>
    <property type="project" value="EnsemblPlants"/>
</dbReference>
<dbReference type="GO" id="GO:0007140">
    <property type="term" value="P:male meiotic nuclear division"/>
    <property type="evidence" value="ECO:0007669"/>
    <property type="project" value="EnsemblPlants"/>
</dbReference>
<dbReference type="GO" id="GO:0090173">
    <property type="term" value="P:regulation of synaptonemal complex assembly"/>
    <property type="evidence" value="ECO:0007669"/>
    <property type="project" value="InterPro"/>
</dbReference>
<dbReference type="GO" id="GO:0071139">
    <property type="term" value="P:resolution of DNA recombination intermediates"/>
    <property type="evidence" value="ECO:0007669"/>
    <property type="project" value="EnsemblPlants"/>
</dbReference>
<dbReference type="GO" id="GO:0000712">
    <property type="term" value="P:resolution of meiotic recombination intermediates"/>
    <property type="evidence" value="ECO:0007669"/>
    <property type="project" value="EnsemblPlants"/>
</dbReference>
<dbReference type="FunFam" id="1.25.40.10:FF:001380">
    <property type="entry name" value="TPR repeat-containing protein ZIP4"/>
    <property type="match status" value="1"/>
</dbReference>
<dbReference type="FunFam" id="1.25.40.10:FF:002262">
    <property type="entry name" value="TPR repeat-containing protein ZIP4"/>
    <property type="match status" value="1"/>
</dbReference>
<dbReference type="Gene3D" id="1.25.40.10">
    <property type="entry name" value="Tetratricopeptide repeat domain"/>
    <property type="match status" value="2"/>
</dbReference>
<dbReference type="InterPro" id="IPR039057">
    <property type="entry name" value="Spo22/ZIP4"/>
</dbReference>
<dbReference type="InterPro" id="IPR013940">
    <property type="entry name" value="Spo22/ZIP4/TEX11"/>
</dbReference>
<dbReference type="InterPro" id="IPR011990">
    <property type="entry name" value="TPR-like_helical_dom_sf"/>
</dbReference>
<dbReference type="PANTHER" id="PTHR40375">
    <property type="entry name" value="SPORULATION-SPECIFIC PROTEIN 22"/>
    <property type="match status" value="1"/>
</dbReference>
<dbReference type="PANTHER" id="PTHR40375:SF2">
    <property type="entry name" value="SPORULATION-SPECIFIC PROTEIN 22"/>
    <property type="match status" value="1"/>
</dbReference>
<dbReference type="Pfam" id="PF08631">
    <property type="entry name" value="SPO22"/>
    <property type="match status" value="1"/>
</dbReference>
<dbReference type="SUPFAM" id="SSF48452">
    <property type="entry name" value="TPR-like"/>
    <property type="match status" value="1"/>
</dbReference>
<name>ZIP4L_ORYSI</name>
<organism>
    <name type="scientific">Oryza sativa subsp. indica</name>
    <name type="common">Rice</name>
    <dbReference type="NCBI Taxonomy" id="39946"/>
    <lineage>
        <taxon>Eukaryota</taxon>
        <taxon>Viridiplantae</taxon>
        <taxon>Streptophyta</taxon>
        <taxon>Embryophyta</taxon>
        <taxon>Tracheophyta</taxon>
        <taxon>Spermatophyta</taxon>
        <taxon>Magnoliopsida</taxon>
        <taxon>Liliopsida</taxon>
        <taxon>Poales</taxon>
        <taxon>Poaceae</taxon>
        <taxon>BOP clade</taxon>
        <taxon>Oryzoideae</taxon>
        <taxon>Oryzeae</taxon>
        <taxon>Oryzinae</taxon>
        <taxon>Oryza</taxon>
        <taxon>Oryza sativa</taxon>
    </lineage>
</organism>
<gene>
    <name evidence="4" type="primary">ZIP4</name>
    <name evidence="5" type="ORF">OsI_04745</name>
</gene>
<reference key="1">
    <citation type="journal article" date="2005" name="PLoS Biol.">
        <title>The genomes of Oryza sativa: a history of duplications.</title>
        <authorList>
            <person name="Yu J."/>
            <person name="Wang J."/>
            <person name="Lin W."/>
            <person name="Li S."/>
            <person name="Li H."/>
            <person name="Zhou J."/>
            <person name="Ni P."/>
            <person name="Dong W."/>
            <person name="Hu S."/>
            <person name="Zeng C."/>
            <person name="Zhang J."/>
            <person name="Zhang Y."/>
            <person name="Li R."/>
            <person name="Xu Z."/>
            <person name="Li S."/>
            <person name="Li X."/>
            <person name="Zheng H."/>
            <person name="Cong L."/>
            <person name="Lin L."/>
            <person name="Yin J."/>
            <person name="Geng J."/>
            <person name="Li G."/>
            <person name="Shi J."/>
            <person name="Liu J."/>
            <person name="Lv H."/>
            <person name="Li J."/>
            <person name="Wang J."/>
            <person name="Deng Y."/>
            <person name="Ran L."/>
            <person name="Shi X."/>
            <person name="Wang X."/>
            <person name="Wu Q."/>
            <person name="Li C."/>
            <person name="Ren X."/>
            <person name="Wang J."/>
            <person name="Wang X."/>
            <person name="Li D."/>
            <person name="Liu D."/>
            <person name="Zhang X."/>
            <person name="Ji Z."/>
            <person name="Zhao W."/>
            <person name="Sun Y."/>
            <person name="Zhang Z."/>
            <person name="Bao J."/>
            <person name="Han Y."/>
            <person name="Dong L."/>
            <person name="Ji J."/>
            <person name="Chen P."/>
            <person name="Wu S."/>
            <person name="Liu J."/>
            <person name="Xiao Y."/>
            <person name="Bu D."/>
            <person name="Tan J."/>
            <person name="Yang L."/>
            <person name="Ye C."/>
            <person name="Zhang J."/>
            <person name="Xu J."/>
            <person name="Zhou Y."/>
            <person name="Yu Y."/>
            <person name="Zhang B."/>
            <person name="Zhuang S."/>
            <person name="Wei H."/>
            <person name="Liu B."/>
            <person name="Lei M."/>
            <person name="Yu H."/>
            <person name="Li Y."/>
            <person name="Xu H."/>
            <person name="Wei S."/>
            <person name="He X."/>
            <person name="Fang L."/>
            <person name="Zhang Z."/>
            <person name="Zhang Y."/>
            <person name="Huang X."/>
            <person name="Su Z."/>
            <person name="Tong W."/>
            <person name="Li J."/>
            <person name="Tong Z."/>
            <person name="Li S."/>
            <person name="Ye J."/>
            <person name="Wang L."/>
            <person name="Fang L."/>
            <person name="Lei T."/>
            <person name="Chen C.-S."/>
            <person name="Chen H.-C."/>
            <person name="Xu Z."/>
            <person name="Li H."/>
            <person name="Huang H."/>
            <person name="Zhang F."/>
            <person name="Xu H."/>
            <person name="Li N."/>
            <person name="Zhao C."/>
            <person name="Li S."/>
            <person name="Dong L."/>
            <person name="Huang Y."/>
            <person name="Li L."/>
            <person name="Xi Y."/>
            <person name="Qi Q."/>
            <person name="Li W."/>
            <person name="Zhang B."/>
            <person name="Hu W."/>
            <person name="Zhang Y."/>
            <person name="Tian X."/>
            <person name="Jiao Y."/>
            <person name="Liang X."/>
            <person name="Jin J."/>
            <person name="Gao L."/>
            <person name="Zheng W."/>
            <person name="Hao B."/>
            <person name="Liu S.-M."/>
            <person name="Wang W."/>
            <person name="Yuan L."/>
            <person name="Cao M."/>
            <person name="McDermott J."/>
            <person name="Samudrala R."/>
            <person name="Wang J."/>
            <person name="Wong G.K.-S."/>
            <person name="Yang H."/>
        </authorList>
    </citation>
    <scope>NUCLEOTIDE SEQUENCE [LARGE SCALE GENOMIC DNA]</scope>
    <source>
        <strain>cv. 93-11</strain>
    </source>
</reference>
<protein>
    <recommendedName>
        <fullName evidence="4">TPR repeat-containing protein ZIP4</fullName>
    </recommendedName>
    <alternativeName>
        <fullName evidence="4">Protein ZIP4 homolog</fullName>
    </alternativeName>
</protein>
<accession>A2WXU2</accession>
<comment type="function">
    <text evidence="1">Required for crossover formation, complete synapsis of homologous chromosomes and bivalent formation during meiosis. Is specific to recombination events resulting in interference-sensitive crossovers (class I meiotic crossover) and works cooperatively with MER3 to promote crossovers.</text>
</comment>
<comment type="subcellular location">
    <subcellularLocation>
        <location evidence="1">Nucleus</location>
    </subcellularLocation>
    <subcellularLocation>
        <location evidence="1">Chromosome</location>
    </subcellularLocation>
    <text evidence="1">Detected in punctuate foci onto the chromosomes in prophase I meiocytes.</text>
</comment>
<sequence>MKISELSPEYRQPPPHAGLIADLSKAVSDVESFAASATAPEKLAADLRRILTSLASAASSSSFTESLSVQIWRLGTRLWNAVVDRANSAALAGGPAALAVEAEIRQAAPELLLLAGIPNGVPSAAAKVASFFHRSGLAWLDLGRVDLASACFEKATPLVSAAATEDRGVLLELNLARARAASDAGDQALAVALLSRSKPLAAASPEGAKSLAQGYLSIGEATLAAKHSNPAVEASTLFTEALDLCEKAASPSSSSPRTPPYGGATPKTPNLEGLKRRCLRFLALERLQAQDYEGVLRCIRVSRASMGLEEEHPSIGVMAMRAWIGSGNMAEADKELERLMANALATENLCVSAAEAYLAAAGPEAARKVLIALAARCRAGGAAAAVRVVKQVIDGGGGGIGRARAIAELVSDERVVALFDGPGNTHERGTMHALLWNCGTEHFRAKNYDTSADLIERSMLYVSRDEESRSRRADCFRVLSICHIALQHLDRALEFVNEAYKVEPNIKCAFLKVKINLQKGEEDEAFKQMKTMVGCVDFNPEFLTLTAHEAMSCKSFGVAVASLSYLLGLYSAERPMPMPEVAVLRNLIELLSREPGTEAEILKYSRRAKQRMADLGVESFFGSGIVGGRELNWFADLSWNMGLRASKEKKYNFGSEFFELAAEFFSSRNAECDENRSKVCKALIMAVTIMLNAEELNNSPLSDSDIKKGVEMLSRAGKLLPLISPSVPVASDQLEANNFLYLHTFNSYQLMGRMGTPAHPQQLQLIKNFASSKACTPANLLTLGVTASKGALPNMLAAEFSLKACITTALASQSPNYRVISCALRKLACLAGLQDLNGSKSDAAYDVFQQAYQIVVGLKEGEYPVEEGQWLVATAWNMSCLPLRLHQAKVARKWMKMGLDLARHLEGMKERIASMQTTFENLERVSGDEPDECSQEEAPKASISGSMSQPVLV</sequence>